<comment type="function">
    <text evidence="1">Catalyzes oxygen-dependent 5-hydroxyuridine (ho5U) modification at position 34 in tRNAs.</text>
</comment>
<comment type="catalytic activity">
    <reaction evidence="1">
        <text>uridine(34) in tRNA + AH2 + O2 = 5-hydroxyuridine(34) in tRNA + A + H2O</text>
        <dbReference type="Rhea" id="RHEA:64224"/>
        <dbReference type="Rhea" id="RHEA-COMP:11727"/>
        <dbReference type="Rhea" id="RHEA-COMP:13381"/>
        <dbReference type="ChEBI" id="CHEBI:13193"/>
        <dbReference type="ChEBI" id="CHEBI:15377"/>
        <dbReference type="ChEBI" id="CHEBI:15379"/>
        <dbReference type="ChEBI" id="CHEBI:17499"/>
        <dbReference type="ChEBI" id="CHEBI:65315"/>
        <dbReference type="ChEBI" id="CHEBI:136877"/>
    </reaction>
</comment>
<comment type="similarity">
    <text evidence="1">Belongs to the TrhO family.</text>
</comment>
<evidence type="ECO:0000255" key="1">
    <source>
        <dbReference type="HAMAP-Rule" id="MF_00469"/>
    </source>
</evidence>
<gene>
    <name evidence="1" type="primary">trhO</name>
    <name type="ordered locus">Shewmr7_1838</name>
</gene>
<organism>
    <name type="scientific">Shewanella sp. (strain MR-7)</name>
    <dbReference type="NCBI Taxonomy" id="60481"/>
    <lineage>
        <taxon>Bacteria</taxon>
        <taxon>Pseudomonadati</taxon>
        <taxon>Pseudomonadota</taxon>
        <taxon>Gammaproteobacteria</taxon>
        <taxon>Alteromonadales</taxon>
        <taxon>Shewanellaceae</taxon>
        <taxon>Shewanella</taxon>
    </lineage>
</organism>
<protein>
    <recommendedName>
        <fullName evidence="1">tRNA uridine(34) hydroxylase</fullName>
        <ecNumber evidence="1">1.14.-.-</ecNumber>
    </recommendedName>
    <alternativeName>
        <fullName evidence="1">tRNA hydroxylation protein O</fullName>
    </alternativeName>
</protein>
<reference key="1">
    <citation type="submission" date="2006-08" db="EMBL/GenBank/DDBJ databases">
        <title>Complete sequence of chromosome 1 of Shewanella sp. MR-7.</title>
        <authorList>
            <person name="Copeland A."/>
            <person name="Lucas S."/>
            <person name="Lapidus A."/>
            <person name="Barry K."/>
            <person name="Detter J.C."/>
            <person name="Glavina del Rio T."/>
            <person name="Hammon N."/>
            <person name="Israni S."/>
            <person name="Dalin E."/>
            <person name="Tice H."/>
            <person name="Pitluck S."/>
            <person name="Kiss H."/>
            <person name="Brettin T."/>
            <person name="Bruce D."/>
            <person name="Han C."/>
            <person name="Tapia R."/>
            <person name="Gilna P."/>
            <person name="Schmutz J."/>
            <person name="Larimer F."/>
            <person name="Land M."/>
            <person name="Hauser L."/>
            <person name="Kyrpides N."/>
            <person name="Mikhailova N."/>
            <person name="Nealson K."/>
            <person name="Konstantinidis K."/>
            <person name="Klappenbach J."/>
            <person name="Tiedje J."/>
            <person name="Richardson P."/>
        </authorList>
    </citation>
    <scope>NUCLEOTIDE SEQUENCE [LARGE SCALE GENOMIC DNA]</scope>
    <source>
        <strain>MR-7</strain>
    </source>
</reference>
<sequence length="333" mass="37885">MSNVVVCALYKFVSLPHFESLREPLLSMMEQAEIKGTLLLASEGINGTVAGTQAAIDALLAWLNNQNGLENIVYKLSFDDEMPFYRTKVKLKKEIVTMGVEGIDPLKVVGTYVKPQDWNALISDPEVILVDTRNDYEVQIGTFKNAINPVTETFREFPDYVKQNLDPAKHKKVAMFCTGGIRCEKSTAYLKEQGFEEVYHLEGGILKYLEEIKQEESLWEGECFVFDNRVAVDHDLKKGQYDQCNACRMPITEAEKLSLAYVQGVSCPHCIDKISEEQRKRFVERERQVNLAKSRNEAHIGSDVNQVIEARRQKKEALRQQSVEKNKAKQANV</sequence>
<feature type="chain" id="PRO_1000013776" description="tRNA uridine(34) hydroxylase">
    <location>
        <begin position="1"/>
        <end position="333"/>
    </location>
</feature>
<feature type="domain" description="Rhodanese" evidence="1">
    <location>
        <begin position="123"/>
        <end position="217"/>
    </location>
</feature>
<feature type="active site" description="Cysteine persulfide intermediate" evidence="1">
    <location>
        <position position="177"/>
    </location>
</feature>
<proteinExistence type="inferred from homology"/>
<dbReference type="EC" id="1.14.-.-" evidence="1"/>
<dbReference type="EMBL" id="CP000444">
    <property type="protein sequence ID" value="ABI42830.1"/>
    <property type="molecule type" value="Genomic_DNA"/>
</dbReference>
<dbReference type="SMR" id="Q0HVM5"/>
<dbReference type="KEGG" id="shm:Shewmr7_1838"/>
<dbReference type="HOGENOM" id="CLU_038878_0_0_6"/>
<dbReference type="GO" id="GO:0016705">
    <property type="term" value="F:oxidoreductase activity, acting on paired donors, with incorporation or reduction of molecular oxygen"/>
    <property type="evidence" value="ECO:0007669"/>
    <property type="project" value="UniProtKB-UniRule"/>
</dbReference>
<dbReference type="GO" id="GO:0006400">
    <property type="term" value="P:tRNA modification"/>
    <property type="evidence" value="ECO:0007669"/>
    <property type="project" value="UniProtKB-UniRule"/>
</dbReference>
<dbReference type="CDD" id="cd01518">
    <property type="entry name" value="RHOD_YceA"/>
    <property type="match status" value="1"/>
</dbReference>
<dbReference type="Gene3D" id="3.30.70.100">
    <property type="match status" value="1"/>
</dbReference>
<dbReference type="Gene3D" id="3.40.250.10">
    <property type="entry name" value="Rhodanese-like domain"/>
    <property type="match status" value="1"/>
</dbReference>
<dbReference type="HAMAP" id="MF_00469">
    <property type="entry name" value="TrhO"/>
    <property type="match status" value="1"/>
</dbReference>
<dbReference type="InterPro" id="IPR001763">
    <property type="entry name" value="Rhodanese-like_dom"/>
</dbReference>
<dbReference type="InterPro" id="IPR036873">
    <property type="entry name" value="Rhodanese-like_dom_sf"/>
</dbReference>
<dbReference type="InterPro" id="IPR020936">
    <property type="entry name" value="TrhO"/>
</dbReference>
<dbReference type="InterPro" id="IPR040503">
    <property type="entry name" value="TRHO_N"/>
</dbReference>
<dbReference type="NCBIfam" id="NF001136">
    <property type="entry name" value="PRK00142.1-4"/>
    <property type="match status" value="1"/>
</dbReference>
<dbReference type="PANTHER" id="PTHR43268:SF3">
    <property type="entry name" value="RHODANESE-LIKE DOMAIN-CONTAINING PROTEIN 7-RELATED"/>
    <property type="match status" value="1"/>
</dbReference>
<dbReference type="PANTHER" id="PTHR43268">
    <property type="entry name" value="THIOSULFATE SULFURTRANSFERASE/RHODANESE-LIKE DOMAIN-CONTAINING PROTEIN 2"/>
    <property type="match status" value="1"/>
</dbReference>
<dbReference type="Pfam" id="PF00581">
    <property type="entry name" value="Rhodanese"/>
    <property type="match status" value="1"/>
</dbReference>
<dbReference type="Pfam" id="PF17773">
    <property type="entry name" value="UPF0176_N"/>
    <property type="match status" value="1"/>
</dbReference>
<dbReference type="SMART" id="SM00450">
    <property type="entry name" value="RHOD"/>
    <property type="match status" value="1"/>
</dbReference>
<dbReference type="SUPFAM" id="SSF52821">
    <property type="entry name" value="Rhodanese/Cell cycle control phosphatase"/>
    <property type="match status" value="1"/>
</dbReference>
<dbReference type="PROSITE" id="PS50206">
    <property type="entry name" value="RHODANESE_3"/>
    <property type="match status" value="1"/>
</dbReference>
<accession>Q0HVM5</accession>
<keyword id="KW-0560">Oxidoreductase</keyword>
<keyword id="KW-0819">tRNA processing</keyword>
<name>TRHO_SHESR</name>